<dbReference type="EC" id="2.7.11.32" evidence="1"/>
<dbReference type="EC" id="2.7.4.27" evidence="1"/>
<dbReference type="EMBL" id="AE017321">
    <property type="protein sequence ID" value="AAW71221.1"/>
    <property type="molecule type" value="Genomic_DNA"/>
</dbReference>
<dbReference type="RefSeq" id="WP_011256831.1">
    <property type="nucleotide sequence ID" value="NC_006833.1"/>
</dbReference>
<dbReference type="SMR" id="Q5GS03"/>
<dbReference type="STRING" id="292805.Wbm0633"/>
<dbReference type="KEGG" id="wbm:Wbm0633"/>
<dbReference type="eggNOG" id="COG1806">
    <property type="taxonomic scope" value="Bacteria"/>
</dbReference>
<dbReference type="HOGENOM" id="CLU_046206_2_0_5"/>
<dbReference type="Proteomes" id="UP000000534">
    <property type="component" value="Chromosome"/>
</dbReference>
<dbReference type="GO" id="GO:0043531">
    <property type="term" value="F:ADP binding"/>
    <property type="evidence" value="ECO:0007669"/>
    <property type="project" value="UniProtKB-UniRule"/>
</dbReference>
<dbReference type="GO" id="GO:0005524">
    <property type="term" value="F:ATP binding"/>
    <property type="evidence" value="ECO:0007669"/>
    <property type="project" value="InterPro"/>
</dbReference>
<dbReference type="GO" id="GO:0016776">
    <property type="term" value="F:phosphotransferase activity, phosphate group as acceptor"/>
    <property type="evidence" value="ECO:0007669"/>
    <property type="project" value="UniProtKB-UniRule"/>
</dbReference>
<dbReference type="GO" id="GO:0004674">
    <property type="term" value="F:protein serine/threonine kinase activity"/>
    <property type="evidence" value="ECO:0007669"/>
    <property type="project" value="UniProtKB-UniRule"/>
</dbReference>
<dbReference type="GO" id="GO:0008641">
    <property type="term" value="F:ubiquitin-like modifier activating enzyme activity"/>
    <property type="evidence" value="ECO:0007669"/>
    <property type="project" value="InterPro"/>
</dbReference>
<dbReference type="HAMAP" id="MF_00921">
    <property type="entry name" value="PDRP"/>
    <property type="match status" value="1"/>
</dbReference>
<dbReference type="InterPro" id="IPR005177">
    <property type="entry name" value="Kinase-pyrophosphorylase"/>
</dbReference>
<dbReference type="InterPro" id="IPR026565">
    <property type="entry name" value="PPDK_reg"/>
</dbReference>
<dbReference type="InterPro" id="IPR035985">
    <property type="entry name" value="Ubiquitin-activating_enz"/>
</dbReference>
<dbReference type="NCBIfam" id="NF003742">
    <property type="entry name" value="PRK05339.1"/>
    <property type="match status" value="1"/>
</dbReference>
<dbReference type="PANTHER" id="PTHR31756">
    <property type="entry name" value="PYRUVATE, PHOSPHATE DIKINASE REGULATORY PROTEIN 1, CHLOROPLASTIC"/>
    <property type="match status" value="1"/>
</dbReference>
<dbReference type="PANTHER" id="PTHR31756:SF3">
    <property type="entry name" value="PYRUVATE, PHOSPHATE DIKINASE REGULATORY PROTEIN 1, CHLOROPLASTIC"/>
    <property type="match status" value="1"/>
</dbReference>
<dbReference type="Pfam" id="PF03618">
    <property type="entry name" value="Kinase-PPPase"/>
    <property type="match status" value="1"/>
</dbReference>
<dbReference type="SUPFAM" id="SSF69572">
    <property type="entry name" value="Activating enzymes of the ubiquitin-like proteins"/>
    <property type="match status" value="1"/>
</dbReference>
<organism>
    <name type="scientific">Wolbachia sp. subsp. Brugia malayi (strain TRS)</name>
    <dbReference type="NCBI Taxonomy" id="292805"/>
    <lineage>
        <taxon>Bacteria</taxon>
        <taxon>Pseudomonadati</taxon>
        <taxon>Pseudomonadota</taxon>
        <taxon>Alphaproteobacteria</taxon>
        <taxon>Rickettsiales</taxon>
        <taxon>Anaplasmataceae</taxon>
        <taxon>Wolbachieae</taxon>
        <taxon>Wolbachia</taxon>
    </lineage>
</organism>
<name>PDRP_WOLTR</name>
<gene>
    <name type="ordered locus">Wbm0633</name>
</gene>
<reference key="1">
    <citation type="journal article" date="2005" name="PLoS Biol.">
        <title>The Wolbachia genome of Brugia malayi: endosymbiont evolution within a human pathogenic nematode.</title>
        <authorList>
            <person name="Foster J."/>
            <person name="Ganatra M."/>
            <person name="Kamal I."/>
            <person name="Ware J."/>
            <person name="Makarova K."/>
            <person name="Ivanova N."/>
            <person name="Bhattacharyya A."/>
            <person name="Kapatral V."/>
            <person name="Kumar S."/>
            <person name="Posfai J."/>
            <person name="Vincze T."/>
            <person name="Ingram J."/>
            <person name="Moran L."/>
            <person name="Lapidus A."/>
            <person name="Omelchenko M."/>
            <person name="Kyrpides N."/>
            <person name="Ghedin E."/>
            <person name="Wang S."/>
            <person name="Goltsman E."/>
            <person name="Joukov V."/>
            <person name="Ostrovskaya O."/>
            <person name="Tsukerman K."/>
            <person name="Mazur M."/>
            <person name="Comb D."/>
            <person name="Koonin E."/>
            <person name="Slatko B."/>
        </authorList>
    </citation>
    <scope>NUCLEOTIDE SEQUENCE [LARGE SCALE GENOMIC DNA]</scope>
    <source>
        <strain>TRS</strain>
    </source>
</reference>
<accession>Q5GS03</accession>
<sequence length="272" mass="31775">MTLKKLNLHLVSDSSGETVISVAKSALKHFRSIETVEYVWSFVKEEEQIDKILEEINKKSNEHNFVICTITNDKLRKYLKDNCVKLKIPYRAILSHIMREISSYLEIEKDEKFDLHTEINNEYFQRIEAINYTINHDDGQNIQDIDKSDIILIGVSRTSKSPTSMYLAYRGYKVANIPFVGEIPFYFDLAKLKDKLTIGLTIDVNRLVEIRKNRLTSINNEDNSIYADPKKVEKEIKKAEELFKQNNWPIIDVTQKSIEEVSATIIQYFNRM</sequence>
<protein>
    <recommendedName>
        <fullName evidence="1">Putative pyruvate, phosphate dikinase regulatory protein</fullName>
        <shortName evidence="1">PPDK regulatory protein</shortName>
        <ecNumber evidence="1">2.7.11.32</ecNumber>
        <ecNumber evidence="1">2.7.4.27</ecNumber>
    </recommendedName>
</protein>
<evidence type="ECO:0000255" key="1">
    <source>
        <dbReference type="HAMAP-Rule" id="MF_00921"/>
    </source>
</evidence>
<feature type="chain" id="PRO_0000196741" description="Putative pyruvate, phosphate dikinase regulatory protein">
    <location>
        <begin position="1"/>
        <end position="272"/>
    </location>
</feature>
<feature type="binding site" evidence="1">
    <location>
        <begin position="154"/>
        <end position="161"/>
    </location>
    <ligand>
        <name>ADP</name>
        <dbReference type="ChEBI" id="CHEBI:456216"/>
    </ligand>
</feature>
<proteinExistence type="inferred from homology"/>
<comment type="function">
    <text evidence="1">Bifunctional serine/threonine kinase and phosphorylase involved in the regulation of the pyruvate, phosphate dikinase (PPDK) by catalyzing its phosphorylation/dephosphorylation.</text>
</comment>
<comment type="catalytic activity">
    <reaction evidence="1">
        <text>N(tele)-phospho-L-histidyl/L-threonyl-[pyruvate, phosphate dikinase] + ADP = N(tele)-phospho-L-histidyl/O-phospho-L-threonyl-[pyruvate, phosphate dikinase] + AMP + H(+)</text>
        <dbReference type="Rhea" id="RHEA:43692"/>
        <dbReference type="Rhea" id="RHEA-COMP:10650"/>
        <dbReference type="Rhea" id="RHEA-COMP:10651"/>
        <dbReference type="ChEBI" id="CHEBI:15378"/>
        <dbReference type="ChEBI" id="CHEBI:30013"/>
        <dbReference type="ChEBI" id="CHEBI:61977"/>
        <dbReference type="ChEBI" id="CHEBI:83586"/>
        <dbReference type="ChEBI" id="CHEBI:456215"/>
        <dbReference type="ChEBI" id="CHEBI:456216"/>
        <dbReference type="EC" id="2.7.11.32"/>
    </reaction>
</comment>
<comment type="catalytic activity">
    <reaction evidence="1">
        <text>N(tele)-phospho-L-histidyl/O-phospho-L-threonyl-[pyruvate, phosphate dikinase] + phosphate + H(+) = N(tele)-phospho-L-histidyl/L-threonyl-[pyruvate, phosphate dikinase] + diphosphate</text>
        <dbReference type="Rhea" id="RHEA:43696"/>
        <dbReference type="Rhea" id="RHEA-COMP:10650"/>
        <dbReference type="Rhea" id="RHEA-COMP:10651"/>
        <dbReference type="ChEBI" id="CHEBI:15378"/>
        <dbReference type="ChEBI" id="CHEBI:30013"/>
        <dbReference type="ChEBI" id="CHEBI:33019"/>
        <dbReference type="ChEBI" id="CHEBI:43474"/>
        <dbReference type="ChEBI" id="CHEBI:61977"/>
        <dbReference type="ChEBI" id="CHEBI:83586"/>
        <dbReference type="EC" id="2.7.4.27"/>
    </reaction>
</comment>
<comment type="similarity">
    <text evidence="1">Belongs to the pyruvate, phosphate/water dikinase regulatory protein family. PDRP subfamily.</text>
</comment>
<keyword id="KW-0418">Kinase</keyword>
<keyword id="KW-0547">Nucleotide-binding</keyword>
<keyword id="KW-1185">Reference proteome</keyword>
<keyword id="KW-0723">Serine/threonine-protein kinase</keyword>
<keyword id="KW-0808">Transferase</keyword>